<keyword id="KW-0149">Chlorophyll biosynthesis</keyword>
<keyword id="KW-0150">Chloroplast</keyword>
<keyword id="KW-0210">Decarboxylase</keyword>
<keyword id="KW-0456">Lyase</keyword>
<keyword id="KW-0934">Plastid</keyword>
<keyword id="KW-0627">Porphyrin biosynthesis</keyword>
<keyword id="KW-1185">Reference proteome</keyword>
<keyword id="KW-0809">Transit peptide</keyword>
<name>DCUP2_ORYSJ</name>
<organism>
    <name type="scientific">Oryza sativa subsp. japonica</name>
    <name type="common">Rice</name>
    <dbReference type="NCBI Taxonomy" id="39947"/>
    <lineage>
        <taxon>Eukaryota</taxon>
        <taxon>Viridiplantae</taxon>
        <taxon>Streptophyta</taxon>
        <taxon>Embryophyta</taxon>
        <taxon>Tracheophyta</taxon>
        <taxon>Spermatophyta</taxon>
        <taxon>Magnoliopsida</taxon>
        <taxon>Liliopsida</taxon>
        <taxon>Poales</taxon>
        <taxon>Poaceae</taxon>
        <taxon>BOP clade</taxon>
        <taxon>Oryzoideae</taxon>
        <taxon>Oryzeae</taxon>
        <taxon>Oryzinae</taxon>
        <taxon>Oryza</taxon>
        <taxon>Oryza sativa</taxon>
    </lineage>
</organism>
<comment type="function">
    <text evidence="1">Catalyzes the decarboxylation of four acetate groups of uroporphyrinogen-III to yield coproporphyrinogen-III.</text>
</comment>
<comment type="catalytic activity">
    <reaction>
        <text>uroporphyrinogen III + 4 H(+) = coproporphyrinogen III + 4 CO2</text>
        <dbReference type="Rhea" id="RHEA:19865"/>
        <dbReference type="ChEBI" id="CHEBI:15378"/>
        <dbReference type="ChEBI" id="CHEBI:16526"/>
        <dbReference type="ChEBI" id="CHEBI:57308"/>
        <dbReference type="ChEBI" id="CHEBI:57309"/>
        <dbReference type="EC" id="4.1.1.37"/>
    </reaction>
</comment>
<comment type="pathway">
    <text>Porphyrin-containing compound metabolism; protoporphyrin-IX biosynthesis; coproporphyrinogen-III from 5-aminolevulinate: step 4/4.</text>
</comment>
<comment type="subunit">
    <text evidence="1">Homodimer.</text>
</comment>
<comment type="subcellular location">
    <subcellularLocation>
        <location evidence="3">Plastid</location>
        <location evidence="3">Chloroplast</location>
    </subcellularLocation>
</comment>
<comment type="similarity">
    <text evidence="3">Belongs to the uroporphyrinogen decarboxylase family.</text>
</comment>
<proteinExistence type="inferred from homology"/>
<sequence>MATACPPLSLQPAYLSGRSARARRPPPAVRCSAVGEVMAETAAVGTAEEPLLVSAIKGRKVERPPVWLMRQAGRYMKSYQLLCERHPSFRERSENVDLVVEISLQPWKVFKPDGVILFSDILTPLPGMNIPFDIVKGKGPVIFDPLRTAAAVNEVREFVPEEWVPYVGQALNILREEVNNEAAVLGFVGAPFTLASYCVEGGSSKNFSKIKKMAFSEPEILHNLLQKFTTSMANYIKYQADNGAQAVQIFDSWATELSPVDFEEFSLPYLKQIVDSVKETHPELPLILYASGSGGLLERLPLTGVDVVSLDWTVDMAEGRKRLGSNIAVQGNVDPGVLFGSKEFISKRIFDTVQKAGNSGHVLNLGHGIKVGTPEENVAHFFEVAKGIRY</sequence>
<feature type="transit peptide" description="Chloroplast" evidence="2">
    <location>
        <begin position="1"/>
        <end position="30"/>
    </location>
</feature>
<feature type="chain" id="PRO_0000376073" description="Uroporphyrinogen decarboxylase 2, chloroplastic">
    <location>
        <begin position="31"/>
        <end position="390"/>
    </location>
</feature>
<feature type="binding site" evidence="1">
    <location>
        <begin position="70"/>
        <end position="74"/>
    </location>
    <ligand>
        <name>substrate</name>
    </ligand>
</feature>
<feature type="binding site" evidence="1">
    <location>
        <position position="89"/>
    </location>
    <ligand>
        <name>substrate</name>
    </ligand>
</feature>
<feature type="binding site" evidence="1">
    <location>
        <position position="119"/>
    </location>
    <ligand>
        <name>substrate</name>
    </ligand>
</feature>
<feature type="binding site" evidence="1">
    <location>
        <position position="120"/>
    </location>
    <ligand>
        <name>substrate</name>
    </ligand>
</feature>
<feature type="binding site" evidence="1">
    <location>
        <position position="197"/>
    </location>
    <ligand>
        <name>substrate</name>
    </ligand>
</feature>
<feature type="binding site" evidence="1">
    <location>
        <position position="252"/>
    </location>
    <ligand>
        <name>substrate</name>
    </ligand>
</feature>
<feature type="binding site" evidence="1">
    <location>
        <position position="367"/>
    </location>
    <ligand>
        <name>substrate</name>
    </ligand>
</feature>
<feature type="site" description="Transition state stabilizer" evidence="1">
    <location>
        <position position="120"/>
    </location>
</feature>
<dbReference type="EC" id="4.1.1.37"/>
<dbReference type="EMBL" id="DP000009">
    <property type="protein sequence ID" value="ABF95829.1"/>
    <property type="molecule type" value="Genomic_DNA"/>
</dbReference>
<dbReference type="EMBL" id="AP008209">
    <property type="protein sequence ID" value="BAF11963.1"/>
    <property type="molecule type" value="Genomic_DNA"/>
</dbReference>
<dbReference type="EMBL" id="AP014959">
    <property type="protein sequence ID" value="BAS84096.1"/>
    <property type="molecule type" value="Genomic_DNA"/>
</dbReference>
<dbReference type="EMBL" id="CM000140">
    <property type="protein sequence ID" value="EEE59019.1"/>
    <property type="molecule type" value="Genomic_DNA"/>
</dbReference>
<dbReference type="RefSeq" id="XP_015630467.1">
    <property type="nucleotide sequence ID" value="XM_015774981.1"/>
</dbReference>
<dbReference type="SMR" id="Q10LR9"/>
<dbReference type="FunCoup" id="Q10LR9">
    <property type="interactions" value="2953"/>
</dbReference>
<dbReference type="STRING" id="39947.Q10LR9"/>
<dbReference type="PaxDb" id="39947-Q10LR9"/>
<dbReference type="EnsemblPlants" id="Os03t0337600-01">
    <property type="protein sequence ID" value="Os03t0337600-01"/>
    <property type="gene ID" value="Os03g0337600"/>
</dbReference>
<dbReference type="Gramene" id="Os03t0337600-01">
    <property type="protein sequence ID" value="Os03t0337600-01"/>
    <property type="gene ID" value="Os03g0337600"/>
</dbReference>
<dbReference type="KEGG" id="dosa:Os03g0337600"/>
<dbReference type="eggNOG" id="KOG2872">
    <property type="taxonomic scope" value="Eukaryota"/>
</dbReference>
<dbReference type="HOGENOM" id="CLU_040933_0_2_1"/>
<dbReference type="InParanoid" id="Q10LR9"/>
<dbReference type="OMA" id="LWLMRQA"/>
<dbReference type="OrthoDB" id="339900at2759"/>
<dbReference type="UniPathway" id="UPA00251">
    <property type="reaction ID" value="UER00321"/>
</dbReference>
<dbReference type="Proteomes" id="UP000000763">
    <property type="component" value="Chromosome 3"/>
</dbReference>
<dbReference type="Proteomes" id="UP000007752">
    <property type="component" value="Chromosome 3"/>
</dbReference>
<dbReference type="Proteomes" id="UP000059680">
    <property type="component" value="Chromosome 3"/>
</dbReference>
<dbReference type="GO" id="GO:0009507">
    <property type="term" value="C:chloroplast"/>
    <property type="evidence" value="ECO:0007669"/>
    <property type="project" value="UniProtKB-SubCell"/>
</dbReference>
<dbReference type="GO" id="GO:0004853">
    <property type="term" value="F:uroporphyrinogen decarboxylase activity"/>
    <property type="evidence" value="ECO:0007669"/>
    <property type="project" value="UniProtKB-EC"/>
</dbReference>
<dbReference type="GO" id="GO:0015995">
    <property type="term" value="P:chlorophyll biosynthetic process"/>
    <property type="evidence" value="ECO:0007669"/>
    <property type="project" value="UniProtKB-KW"/>
</dbReference>
<dbReference type="GO" id="GO:0006782">
    <property type="term" value="P:protoporphyrinogen IX biosynthetic process"/>
    <property type="evidence" value="ECO:0007669"/>
    <property type="project" value="UniProtKB-UniPathway"/>
</dbReference>
<dbReference type="CDD" id="cd00717">
    <property type="entry name" value="URO-D"/>
    <property type="match status" value="1"/>
</dbReference>
<dbReference type="FunFam" id="3.20.20.210:FF:000006">
    <property type="entry name" value="Uroporphyrinogen decarboxylase"/>
    <property type="match status" value="1"/>
</dbReference>
<dbReference type="Gene3D" id="3.20.20.210">
    <property type="match status" value="1"/>
</dbReference>
<dbReference type="HAMAP" id="MF_00218">
    <property type="entry name" value="URO_D"/>
    <property type="match status" value="1"/>
</dbReference>
<dbReference type="InterPro" id="IPR038071">
    <property type="entry name" value="UROD/MetE-like_sf"/>
</dbReference>
<dbReference type="InterPro" id="IPR006361">
    <property type="entry name" value="Uroporphyrinogen_deCO2ase_HemE"/>
</dbReference>
<dbReference type="InterPro" id="IPR000257">
    <property type="entry name" value="Uroporphyrinogen_deCOase"/>
</dbReference>
<dbReference type="NCBIfam" id="TIGR01464">
    <property type="entry name" value="hemE"/>
    <property type="match status" value="1"/>
</dbReference>
<dbReference type="PANTHER" id="PTHR21091">
    <property type="entry name" value="METHYLTETRAHYDROFOLATE:HOMOCYSTEINE METHYLTRANSFERASE RELATED"/>
    <property type="match status" value="1"/>
</dbReference>
<dbReference type="PANTHER" id="PTHR21091:SF169">
    <property type="entry name" value="UROPORPHYRINOGEN DECARBOXYLASE"/>
    <property type="match status" value="1"/>
</dbReference>
<dbReference type="Pfam" id="PF01208">
    <property type="entry name" value="URO-D"/>
    <property type="match status" value="1"/>
</dbReference>
<dbReference type="SUPFAM" id="SSF51726">
    <property type="entry name" value="UROD/MetE-like"/>
    <property type="match status" value="1"/>
</dbReference>
<dbReference type="PROSITE" id="PS00906">
    <property type="entry name" value="UROD_1"/>
    <property type="match status" value="1"/>
</dbReference>
<dbReference type="PROSITE" id="PS00907">
    <property type="entry name" value="UROD_2"/>
    <property type="match status" value="1"/>
</dbReference>
<reference key="1">
    <citation type="journal article" date="2005" name="Genome Res.">
        <title>Sequence, annotation, and analysis of synteny between rice chromosome 3 and diverged grass species.</title>
        <authorList>
            <consortium name="The rice chromosome 3 sequencing consortium"/>
            <person name="Buell C.R."/>
            <person name="Yuan Q."/>
            <person name="Ouyang S."/>
            <person name="Liu J."/>
            <person name="Zhu W."/>
            <person name="Wang A."/>
            <person name="Maiti R."/>
            <person name="Haas B."/>
            <person name="Wortman J."/>
            <person name="Pertea M."/>
            <person name="Jones K.M."/>
            <person name="Kim M."/>
            <person name="Overton L."/>
            <person name="Tsitrin T."/>
            <person name="Fadrosh D."/>
            <person name="Bera J."/>
            <person name="Weaver B."/>
            <person name="Jin S."/>
            <person name="Johri S."/>
            <person name="Reardon M."/>
            <person name="Webb K."/>
            <person name="Hill J."/>
            <person name="Moffat K."/>
            <person name="Tallon L."/>
            <person name="Van Aken S."/>
            <person name="Lewis M."/>
            <person name="Utterback T."/>
            <person name="Feldblyum T."/>
            <person name="Zismann V."/>
            <person name="Iobst S."/>
            <person name="Hsiao J."/>
            <person name="de Vazeille A.R."/>
            <person name="Salzberg S.L."/>
            <person name="White O."/>
            <person name="Fraser C.M."/>
            <person name="Yu Y."/>
            <person name="Kim H."/>
            <person name="Rambo T."/>
            <person name="Currie J."/>
            <person name="Collura K."/>
            <person name="Kernodle-Thompson S."/>
            <person name="Wei F."/>
            <person name="Kudrna K."/>
            <person name="Ammiraju J.S.S."/>
            <person name="Luo M."/>
            <person name="Goicoechea J.L."/>
            <person name="Wing R.A."/>
            <person name="Henry D."/>
            <person name="Oates R."/>
            <person name="Palmer M."/>
            <person name="Pries G."/>
            <person name="Saski C."/>
            <person name="Simmons J."/>
            <person name="Soderlund C."/>
            <person name="Nelson W."/>
            <person name="de la Bastide M."/>
            <person name="Spiegel L."/>
            <person name="Nascimento L."/>
            <person name="Huang E."/>
            <person name="Preston R."/>
            <person name="Zutavern T."/>
            <person name="Palmer L."/>
            <person name="O'Shaughnessy A."/>
            <person name="Dike S."/>
            <person name="McCombie W.R."/>
            <person name="Minx P."/>
            <person name="Cordum H."/>
            <person name="Wilson R."/>
            <person name="Jin W."/>
            <person name="Lee H.R."/>
            <person name="Jiang J."/>
            <person name="Jackson S."/>
        </authorList>
    </citation>
    <scope>NUCLEOTIDE SEQUENCE [LARGE SCALE GENOMIC DNA]</scope>
    <source>
        <strain>cv. Nipponbare</strain>
    </source>
</reference>
<reference key="2">
    <citation type="journal article" date="2005" name="Nature">
        <title>The map-based sequence of the rice genome.</title>
        <authorList>
            <consortium name="International rice genome sequencing project (IRGSP)"/>
        </authorList>
    </citation>
    <scope>NUCLEOTIDE SEQUENCE [LARGE SCALE GENOMIC DNA]</scope>
    <source>
        <strain>cv. Nipponbare</strain>
    </source>
</reference>
<reference key="3">
    <citation type="journal article" date="2008" name="Nucleic Acids Res.">
        <title>The rice annotation project database (RAP-DB): 2008 update.</title>
        <authorList>
            <consortium name="The rice annotation project (RAP)"/>
        </authorList>
    </citation>
    <scope>GENOME REANNOTATION</scope>
    <source>
        <strain>cv. Nipponbare</strain>
    </source>
</reference>
<reference key="4">
    <citation type="journal article" date="2013" name="Rice">
        <title>Improvement of the Oryza sativa Nipponbare reference genome using next generation sequence and optical map data.</title>
        <authorList>
            <person name="Kawahara Y."/>
            <person name="de la Bastide M."/>
            <person name="Hamilton J.P."/>
            <person name="Kanamori H."/>
            <person name="McCombie W.R."/>
            <person name="Ouyang S."/>
            <person name="Schwartz D.C."/>
            <person name="Tanaka T."/>
            <person name="Wu J."/>
            <person name="Zhou S."/>
            <person name="Childs K.L."/>
            <person name="Davidson R.M."/>
            <person name="Lin H."/>
            <person name="Quesada-Ocampo L."/>
            <person name="Vaillancourt B."/>
            <person name="Sakai H."/>
            <person name="Lee S.S."/>
            <person name="Kim J."/>
            <person name="Numa H."/>
            <person name="Itoh T."/>
            <person name="Buell C.R."/>
            <person name="Matsumoto T."/>
        </authorList>
    </citation>
    <scope>GENOME REANNOTATION</scope>
    <source>
        <strain>cv. Nipponbare</strain>
    </source>
</reference>
<reference key="5">
    <citation type="journal article" date="2005" name="PLoS Biol.">
        <title>The genomes of Oryza sativa: a history of duplications.</title>
        <authorList>
            <person name="Yu J."/>
            <person name="Wang J."/>
            <person name="Lin W."/>
            <person name="Li S."/>
            <person name="Li H."/>
            <person name="Zhou J."/>
            <person name="Ni P."/>
            <person name="Dong W."/>
            <person name="Hu S."/>
            <person name="Zeng C."/>
            <person name="Zhang J."/>
            <person name="Zhang Y."/>
            <person name="Li R."/>
            <person name="Xu Z."/>
            <person name="Li S."/>
            <person name="Li X."/>
            <person name="Zheng H."/>
            <person name="Cong L."/>
            <person name="Lin L."/>
            <person name="Yin J."/>
            <person name="Geng J."/>
            <person name="Li G."/>
            <person name="Shi J."/>
            <person name="Liu J."/>
            <person name="Lv H."/>
            <person name="Li J."/>
            <person name="Wang J."/>
            <person name="Deng Y."/>
            <person name="Ran L."/>
            <person name="Shi X."/>
            <person name="Wang X."/>
            <person name="Wu Q."/>
            <person name="Li C."/>
            <person name="Ren X."/>
            <person name="Wang J."/>
            <person name="Wang X."/>
            <person name="Li D."/>
            <person name="Liu D."/>
            <person name="Zhang X."/>
            <person name="Ji Z."/>
            <person name="Zhao W."/>
            <person name="Sun Y."/>
            <person name="Zhang Z."/>
            <person name="Bao J."/>
            <person name="Han Y."/>
            <person name="Dong L."/>
            <person name="Ji J."/>
            <person name="Chen P."/>
            <person name="Wu S."/>
            <person name="Liu J."/>
            <person name="Xiao Y."/>
            <person name="Bu D."/>
            <person name="Tan J."/>
            <person name="Yang L."/>
            <person name="Ye C."/>
            <person name="Zhang J."/>
            <person name="Xu J."/>
            <person name="Zhou Y."/>
            <person name="Yu Y."/>
            <person name="Zhang B."/>
            <person name="Zhuang S."/>
            <person name="Wei H."/>
            <person name="Liu B."/>
            <person name="Lei M."/>
            <person name="Yu H."/>
            <person name="Li Y."/>
            <person name="Xu H."/>
            <person name="Wei S."/>
            <person name="He X."/>
            <person name="Fang L."/>
            <person name="Zhang Z."/>
            <person name="Zhang Y."/>
            <person name="Huang X."/>
            <person name="Su Z."/>
            <person name="Tong W."/>
            <person name="Li J."/>
            <person name="Tong Z."/>
            <person name="Li S."/>
            <person name="Ye J."/>
            <person name="Wang L."/>
            <person name="Fang L."/>
            <person name="Lei T."/>
            <person name="Chen C.-S."/>
            <person name="Chen H.-C."/>
            <person name="Xu Z."/>
            <person name="Li H."/>
            <person name="Huang H."/>
            <person name="Zhang F."/>
            <person name="Xu H."/>
            <person name="Li N."/>
            <person name="Zhao C."/>
            <person name="Li S."/>
            <person name="Dong L."/>
            <person name="Huang Y."/>
            <person name="Li L."/>
            <person name="Xi Y."/>
            <person name="Qi Q."/>
            <person name="Li W."/>
            <person name="Zhang B."/>
            <person name="Hu W."/>
            <person name="Zhang Y."/>
            <person name="Tian X."/>
            <person name="Jiao Y."/>
            <person name="Liang X."/>
            <person name="Jin J."/>
            <person name="Gao L."/>
            <person name="Zheng W."/>
            <person name="Hao B."/>
            <person name="Liu S.-M."/>
            <person name="Wang W."/>
            <person name="Yuan L."/>
            <person name="Cao M."/>
            <person name="McDermott J."/>
            <person name="Samudrala R."/>
            <person name="Wang J."/>
            <person name="Wong G.K.-S."/>
            <person name="Yang H."/>
        </authorList>
    </citation>
    <scope>NUCLEOTIDE SEQUENCE [LARGE SCALE GENOMIC DNA]</scope>
    <source>
        <strain>cv. Nipponbare</strain>
    </source>
</reference>
<accession>Q10LR9</accession>
<accession>A0A0P0VX84</accession>
<evidence type="ECO:0000250" key="1"/>
<evidence type="ECO:0000255" key="2"/>
<evidence type="ECO:0000305" key="3"/>
<gene>
    <name type="ordered locus">Os03g0337600</name>
    <name type="ordered locus">LOC_Os03g21900</name>
    <name type="ORF">OsJ_10762</name>
</gene>
<protein>
    <recommendedName>
        <fullName>Uroporphyrinogen decarboxylase 2, chloroplastic</fullName>
        <shortName>UPD2</shortName>
        <shortName>URO-D2</shortName>
        <ecNumber>4.1.1.37</ecNumber>
    </recommendedName>
</protein>